<protein>
    <recommendedName>
        <fullName>Achatin-1</fullName>
    </recommendedName>
    <alternativeName>
        <fullName>Achatin-I</fullName>
    </alternativeName>
</protein>
<sequence length="4" mass="408">GFAD</sequence>
<name>ACH1_LISFU</name>
<dbReference type="PIR" id="A32480">
    <property type="entry name" value="A32480"/>
</dbReference>
<dbReference type="GO" id="GO:0005179">
    <property type="term" value="F:hormone activity"/>
    <property type="evidence" value="ECO:0007669"/>
    <property type="project" value="UniProtKB-KW"/>
</dbReference>
<accession>P35904</accession>
<reference key="1">
    <citation type="journal article" date="1989" name="Biochem. Biophys. Res. Commun.">
        <title>Achatin-I, an endogenous neuroexcitatory tetrapeptide from Achatina fulica Ferussac containing a D-amino acid residue.</title>
        <authorList>
            <person name="Kamatani Y."/>
            <person name="Minakata H."/>
            <person name="Kenny P.T.M."/>
            <person name="Iwashita T."/>
            <person name="Watanabe K."/>
            <person name="Funase K."/>
            <person name="Sun X.P."/>
            <person name="Yongsiri A."/>
            <person name="Kim K.H."/>
            <person name="Novales-Li P."/>
            <person name="Novales E.T."/>
            <person name="Kanapi C.G."/>
            <person name="Takeuchi H."/>
            <person name="Nomoto K."/>
        </authorList>
    </citation>
    <scope>PROTEIN SEQUENCE</scope>
    <scope>D-AMINO ACID AT PHE-2</scope>
    <scope>CHARACTERIZATION</scope>
    <scope>SYNTHESIS</scope>
    <source>
        <strain>Ferussac</strain>
        <tissue>Ganglion</tissue>
    </source>
</reference>
<reference key="2">
    <citation type="journal article" date="1991" name="Biochem. Biophys. Res. Commun.">
        <title>Purification of achatin-I from the atria of the African giant snail, Achatina fulica, and its possible function.</title>
        <authorList>
            <person name="Fujimoto K."/>
            <person name="Kubota I."/>
            <person name="Yasuda-Kamatani Y."/>
            <person name="Minakata H."/>
            <person name="Nomoto K."/>
            <person name="Yoshida M."/>
            <person name="Harada A."/>
            <person name="Muneoka Y."/>
            <person name="Kobayashi M."/>
        </authorList>
    </citation>
    <scope>CHARACTERIZATION</scope>
    <source>
        <strain>Ferussac</strain>
        <tissue>Heart atrium</tissue>
    </source>
</reference>
<reference key="3">
    <citation type="journal article" date="1992" name="Int. J. Pept. Protein Res.">
        <title>Crystal structure and molecular conformation of achatin-I (H-Gly-D-Phe-Ala-Asp-OH), an endogenous neuropeptide containing a D-amino acid residue.</title>
        <authorList>
            <person name="Ishida T."/>
            <person name="In Y."/>
            <person name="Doi M."/>
            <person name="Inoue M."/>
            <person name="Yasuda-Kamatani Y."/>
            <person name="Minakata H."/>
            <person name="Iwashita T."/>
            <person name="Nomoto K."/>
        </authorList>
    </citation>
    <scope>CRYSTALLIZATION</scope>
</reference>
<feature type="peptide" id="PRO_0000044101" description="Achatin-1">
    <location>
        <begin position="1"/>
        <end position="4"/>
    </location>
</feature>
<feature type="modified residue" description="D-phenylalanine" evidence="1">
    <location>
        <position position="2"/>
    </location>
</feature>
<evidence type="ECO:0000269" key="1">
    <source>
    </source>
</evidence>
<proteinExistence type="evidence at protein level"/>
<keyword id="KW-0208">D-amino acid</keyword>
<keyword id="KW-0903">Direct protein sequencing</keyword>
<keyword id="KW-0372">Hormone</keyword>
<organism>
    <name type="scientific">Lissachatina fulica</name>
    <name type="common">Giant African land snail</name>
    <name type="synonym">Achatina fulica</name>
    <dbReference type="NCBI Taxonomy" id="2315439"/>
    <lineage>
        <taxon>Eukaryota</taxon>
        <taxon>Metazoa</taxon>
        <taxon>Spiralia</taxon>
        <taxon>Lophotrochozoa</taxon>
        <taxon>Mollusca</taxon>
        <taxon>Gastropoda</taxon>
        <taxon>Heterobranchia</taxon>
        <taxon>Euthyneura</taxon>
        <taxon>Panpulmonata</taxon>
        <taxon>Eupulmonata</taxon>
        <taxon>Stylommatophora</taxon>
        <taxon>Helicina</taxon>
        <taxon>Achatinoidea</taxon>
        <taxon>Achatinidae</taxon>
        <taxon>Lissachatina</taxon>
    </lineage>
</organism>
<comment type="function">
    <text>Neuroexcitatory peptide; increases the impulse frequency and produces a spike broadening of the identified heart excitatory neuron (PON); also enhances the amplitude and frequency of the heart beat. Has also an effect on several other muscles.</text>
</comment>